<dbReference type="EMBL" id="AB023036">
    <property type="protein sequence ID" value="BAB02781.1"/>
    <property type="molecule type" value="Genomic_DNA"/>
</dbReference>
<dbReference type="EMBL" id="CP002686">
    <property type="protein sequence ID" value="AEE76787.1"/>
    <property type="molecule type" value="Genomic_DNA"/>
</dbReference>
<dbReference type="EMBL" id="AY070410">
    <property type="protein sequence ID" value="AAL49906.1"/>
    <property type="molecule type" value="mRNA"/>
</dbReference>
<dbReference type="EMBL" id="AY122939">
    <property type="protein sequence ID" value="AAM67472.1"/>
    <property type="molecule type" value="mRNA"/>
</dbReference>
<dbReference type="EMBL" id="AY086550">
    <property type="protein sequence ID" value="AAM63614.1"/>
    <property type="status" value="ALT_INIT"/>
    <property type="molecule type" value="mRNA"/>
</dbReference>
<dbReference type="RefSeq" id="NP_566734.1">
    <property type="nucleotide sequence ID" value="NM_113266.4"/>
</dbReference>
<dbReference type="SMR" id="Q9LUG5"/>
<dbReference type="BioGRID" id="7274">
    <property type="interactions" value="38"/>
</dbReference>
<dbReference type="FunCoup" id="Q9LUG5">
    <property type="interactions" value="3906"/>
</dbReference>
<dbReference type="IntAct" id="Q9LUG5">
    <property type="interactions" value="3"/>
</dbReference>
<dbReference type="STRING" id="3702.Q9LUG5"/>
<dbReference type="PaxDb" id="3702-AT3G23620.1"/>
<dbReference type="ProteomicsDB" id="228232"/>
<dbReference type="EnsemblPlants" id="AT3G23620.1">
    <property type="protein sequence ID" value="AT3G23620.1"/>
    <property type="gene ID" value="AT3G23620"/>
</dbReference>
<dbReference type="GeneID" id="821942"/>
<dbReference type="Gramene" id="AT3G23620.1">
    <property type="protein sequence ID" value="AT3G23620.1"/>
    <property type="gene ID" value="AT3G23620"/>
</dbReference>
<dbReference type="KEGG" id="ath:AT3G23620"/>
<dbReference type="Araport" id="AT3G23620"/>
<dbReference type="TAIR" id="AT3G23620">
    <property type="gene designation" value="ARPF2"/>
</dbReference>
<dbReference type="eggNOG" id="KOG3031">
    <property type="taxonomic scope" value="Eukaryota"/>
</dbReference>
<dbReference type="HOGENOM" id="CLU_049783_1_0_1"/>
<dbReference type="InParanoid" id="Q9LUG5"/>
<dbReference type="OMA" id="VGLKPMF"/>
<dbReference type="OrthoDB" id="407658at2759"/>
<dbReference type="PhylomeDB" id="Q9LUG5"/>
<dbReference type="CD-CODE" id="4299E36E">
    <property type="entry name" value="Nucleolus"/>
</dbReference>
<dbReference type="PRO" id="PR:Q9LUG5"/>
<dbReference type="Proteomes" id="UP000006548">
    <property type="component" value="Chromosome 3"/>
</dbReference>
<dbReference type="ExpressionAtlas" id="Q9LUG5">
    <property type="expression patterns" value="baseline and differential"/>
</dbReference>
<dbReference type="GO" id="GO:0005730">
    <property type="term" value="C:nucleolus"/>
    <property type="evidence" value="ECO:0000314"/>
    <property type="project" value="TAIR"/>
</dbReference>
<dbReference type="GO" id="GO:0019843">
    <property type="term" value="F:rRNA binding"/>
    <property type="evidence" value="ECO:0000314"/>
    <property type="project" value="TAIR"/>
</dbReference>
<dbReference type="GO" id="GO:0000470">
    <property type="term" value="P:maturation of LSU-rRNA"/>
    <property type="evidence" value="ECO:0007669"/>
    <property type="project" value="InterPro"/>
</dbReference>
<dbReference type="GO" id="GO:0000027">
    <property type="term" value="P:ribosomal large subunit assembly"/>
    <property type="evidence" value="ECO:0007669"/>
    <property type="project" value="InterPro"/>
</dbReference>
<dbReference type="GO" id="GO:0032774">
    <property type="term" value="P:RNA biosynthetic process"/>
    <property type="evidence" value="ECO:0000315"/>
    <property type="project" value="TAIR"/>
</dbReference>
<dbReference type="InterPro" id="IPR007109">
    <property type="entry name" value="Brix"/>
</dbReference>
<dbReference type="InterPro" id="IPR039770">
    <property type="entry name" value="Rpf2"/>
</dbReference>
<dbReference type="PANTHER" id="PTHR12728">
    <property type="entry name" value="BRIX DOMAIN CONTAINING PROTEIN"/>
    <property type="match status" value="1"/>
</dbReference>
<dbReference type="PANTHER" id="PTHR12728:SF0">
    <property type="entry name" value="RIBOSOME PRODUCTION FACTOR 2 HOMOLOG"/>
    <property type="match status" value="1"/>
</dbReference>
<dbReference type="Pfam" id="PF04427">
    <property type="entry name" value="Brix"/>
    <property type="match status" value="1"/>
</dbReference>
<dbReference type="SMART" id="SM00879">
    <property type="entry name" value="Brix"/>
    <property type="match status" value="1"/>
</dbReference>
<dbReference type="PROSITE" id="PS50833">
    <property type="entry name" value="BRIX"/>
    <property type="match status" value="1"/>
</dbReference>
<feature type="chain" id="PRO_0000120227" description="Ribosome production factor 2 homolog">
    <location>
        <begin position="1"/>
        <end position="314"/>
    </location>
</feature>
<feature type="domain" description="Brix" evidence="2">
    <location>
        <begin position="28"/>
        <end position="238"/>
    </location>
</feature>
<feature type="region of interest" description="Disordered" evidence="3">
    <location>
        <begin position="238"/>
        <end position="314"/>
    </location>
</feature>
<feature type="compositionally biased region" description="Basic and acidic residues" evidence="3">
    <location>
        <begin position="239"/>
        <end position="249"/>
    </location>
</feature>
<feature type="compositionally biased region" description="Basic and acidic residues" evidence="3">
    <location>
        <begin position="275"/>
        <end position="314"/>
    </location>
</feature>
<feature type="sequence conflict" description="In Ref. 4; AAM63614." evidence="4" ref="4">
    <original>D</original>
    <variation>Y</variation>
    <location>
        <position position="133"/>
    </location>
</feature>
<feature type="sequence conflict" description="In Ref. 4; AAM63614." evidence="4" ref="4">
    <original>G</original>
    <variation>S</variation>
    <location>
        <position position="222"/>
    </location>
</feature>
<accession>Q9LUG5</accession>
<accession>Q8LCK0</accession>
<evidence type="ECO:0000250" key="1"/>
<evidence type="ECO:0000255" key="2">
    <source>
        <dbReference type="PROSITE-ProRule" id="PRU00034"/>
    </source>
</evidence>
<evidence type="ECO:0000256" key="3">
    <source>
        <dbReference type="SAM" id="MobiDB-lite"/>
    </source>
</evidence>
<evidence type="ECO:0000305" key="4"/>
<name>RPF2_ARATH</name>
<organism>
    <name type="scientific">Arabidopsis thaliana</name>
    <name type="common">Mouse-ear cress</name>
    <dbReference type="NCBI Taxonomy" id="3702"/>
    <lineage>
        <taxon>Eukaryota</taxon>
        <taxon>Viridiplantae</taxon>
        <taxon>Streptophyta</taxon>
        <taxon>Embryophyta</taxon>
        <taxon>Tracheophyta</taxon>
        <taxon>Spermatophyta</taxon>
        <taxon>Magnoliopsida</taxon>
        <taxon>eudicotyledons</taxon>
        <taxon>Gunneridae</taxon>
        <taxon>Pentapetalae</taxon>
        <taxon>rosids</taxon>
        <taxon>malvids</taxon>
        <taxon>Brassicales</taxon>
        <taxon>Brassicaceae</taxon>
        <taxon>Camelineae</taxon>
        <taxon>Arabidopsis</taxon>
    </lineage>
</organism>
<gene>
    <name type="ordered locus">At3g23620</name>
    <name type="ORF">MDB19.11</name>
</gene>
<sequence length="314" mass="35728">MMEIRTPKTGKAKRVLESRAPKLVETGKKTLILHGTKTSATLSSVMTELYRLKKGGAIRYSRRNENIRPFESGGETSLEFFSQKTDCSIFVYGSHTKKRPDNLVLGRMYDHQVYDLIEVGIENFKSLRAFSYDKKFAPHEGTKPFICFIGEGFENVSELKHLKEVLTDLFRGEVVDNLNLTGLDRAYVCSAISPTKVFLTHCALKLKKSGSIVPRMELVEVGPSMDLVIRRNRLPNDSLMKEAMRTSKDKPKKKEKNVDQDAVLGKTGKIYMPDQKLKEMKLFDKSKGSKRERKDAKLKHKEETVAKKMKVSSE</sequence>
<comment type="subcellular location">
    <subcellularLocation>
        <location evidence="1">Nucleus</location>
        <location evidence="1">Nucleolus</location>
    </subcellularLocation>
</comment>
<comment type="similarity">
    <text evidence="4">Belongs to the RPF2 family.</text>
</comment>
<comment type="sequence caution" evidence="4">
    <conflict type="erroneous initiation">
        <sequence resource="EMBL-CDS" id="AAM63614"/>
    </conflict>
</comment>
<reference key="1">
    <citation type="journal article" date="2000" name="DNA Res.">
        <title>Structural analysis of Arabidopsis thaliana chromosome 3. I. Sequence features of the regions of 4,504,864 bp covered by sixty P1 and TAC clones.</title>
        <authorList>
            <person name="Sato S."/>
            <person name="Nakamura Y."/>
            <person name="Kaneko T."/>
            <person name="Katoh T."/>
            <person name="Asamizu E."/>
            <person name="Tabata S."/>
        </authorList>
    </citation>
    <scope>NUCLEOTIDE SEQUENCE [LARGE SCALE GENOMIC DNA]</scope>
    <source>
        <strain>cv. Columbia</strain>
    </source>
</reference>
<reference key="2">
    <citation type="journal article" date="2017" name="Plant J.">
        <title>Araport11: a complete reannotation of the Arabidopsis thaliana reference genome.</title>
        <authorList>
            <person name="Cheng C.Y."/>
            <person name="Krishnakumar V."/>
            <person name="Chan A.P."/>
            <person name="Thibaud-Nissen F."/>
            <person name="Schobel S."/>
            <person name="Town C.D."/>
        </authorList>
    </citation>
    <scope>GENOME REANNOTATION</scope>
    <source>
        <strain>cv. Columbia</strain>
    </source>
</reference>
<reference key="3">
    <citation type="journal article" date="2003" name="Science">
        <title>Empirical analysis of transcriptional activity in the Arabidopsis genome.</title>
        <authorList>
            <person name="Yamada K."/>
            <person name="Lim J."/>
            <person name="Dale J.M."/>
            <person name="Chen H."/>
            <person name="Shinn P."/>
            <person name="Palm C.J."/>
            <person name="Southwick A.M."/>
            <person name="Wu H.C."/>
            <person name="Kim C.J."/>
            <person name="Nguyen M."/>
            <person name="Pham P.K."/>
            <person name="Cheuk R.F."/>
            <person name="Karlin-Newmann G."/>
            <person name="Liu S.X."/>
            <person name="Lam B."/>
            <person name="Sakano H."/>
            <person name="Wu T."/>
            <person name="Yu G."/>
            <person name="Miranda M."/>
            <person name="Quach H.L."/>
            <person name="Tripp M."/>
            <person name="Chang C.H."/>
            <person name="Lee J.M."/>
            <person name="Toriumi M.J."/>
            <person name="Chan M.M."/>
            <person name="Tang C.C."/>
            <person name="Onodera C.S."/>
            <person name="Deng J.M."/>
            <person name="Akiyama K."/>
            <person name="Ansari Y."/>
            <person name="Arakawa T."/>
            <person name="Banh J."/>
            <person name="Banno F."/>
            <person name="Bowser L."/>
            <person name="Brooks S.Y."/>
            <person name="Carninci P."/>
            <person name="Chao Q."/>
            <person name="Choy N."/>
            <person name="Enju A."/>
            <person name="Goldsmith A.D."/>
            <person name="Gurjal M."/>
            <person name="Hansen N.F."/>
            <person name="Hayashizaki Y."/>
            <person name="Johnson-Hopson C."/>
            <person name="Hsuan V.W."/>
            <person name="Iida K."/>
            <person name="Karnes M."/>
            <person name="Khan S."/>
            <person name="Koesema E."/>
            <person name="Ishida J."/>
            <person name="Jiang P.X."/>
            <person name="Jones T."/>
            <person name="Kawai J."/>
            <person name="Kamiya A."/>
            <person name="Meyers C."/>
            <person name="Nakajima M."/>
            <person name="Narusaka M."/>
            <person name="Seki M."/>
            <person name="Sakurai T."/>
            <person name="Satou M."/>
            <person name="Tamse R."/>
            <person name="Vaysberg M."/>
            <person name="Wallender E.K."/>
            <person name="Wong C."/>
            <person name="Yamamura Y."/>
            <person name="Yuan S."/>
            <person name="Shinozaki K."/>
            <person name="Davis R.W."/>
            <person name="Theologis A."/>
            <person name="Ecker J.R."/>
        </authorList>
    </citation>
    <scope>NUCLEOTIDE SEQUENCE [LARGE SCALE MRNA]</scope>
    <source>
        <strain>cv. Columbia</strain>
    </source>
</reference>
<reference key="4">
    <citation type="submission" date="2002-03" db="EMBL/GenBank/DDBJ databases">
        <title>Full-length cDNA from Arabidopsis thaliana.</title>
        <authorList>
            <person name="Brover V.V."/>
            <person name="Troukhan M.E."/>
            <person name="Alexandrov N.A."/>
            <person name="Lu Y.-P."/>
            <person name="Flavell R.B."/>
            <person name="Feldmann K.A."/>
        </authorList>
    </citation>
    <scope>NUCLEOTIDE SEQUENCE [LARGE SCALE MRNA]</scope>
</reference>
<protein>
    <recommendedName>
        <fullName>Ribosome production factor 2 homolog</fullName>
    </recommendedName>
    <alternativeName>
        <fullName>Brix domain-containing protein 1 homolog</fullName>
    </alternativeName>
    <alternativeName>
        <fullName>Ribosome biogenesis protein RPF2 homolog</fullName>
    </alternativeName>
</protein>
<proteinExistence type="evidence at transcript level"/>
<keyword id="KW-0539">Nucleus</keyword>
<keyword id="KW-1185">Reference proteome</keyword>